<feature type="chain" id="PRO_0000394686" description="Cytotoxin 2a" evidence="3 4">
    <location>
        <begin position="1"/>
        <end position="60"/>
    </location>
</feature>
<feature type="disulfide bond" evidence="2">
    <location>
        <begin position="3"/>
        <end position="21"/>
    </location>
</feature>
<feature type="disulfide bond" evidence="2">
    <location>
        <begin position="14"/>
        <end position="38"/>
    </location>
</feature>
<feature type="disulfide bond" evidence="2">
    <location>
        <begin position="42"/>
        <end position="53"/>
    </location>
</feature>
<feature type="disulfide bond" evidence="2">
    <location>
        <begin position="54"/>
        <end position="59"/>
    </location>
</feature>
<proteinExistence type="evidence at protein level"/>
<reference evidence="7" key="1">
    <citation type="journal article" date="2016" name="Comp. Biochem. Physiol.">
        <title>Comparison of the primary structures, cytotoxicities, and affinities to phospholipids of five kinds of cytotoxins from the venom of Indian cobra, Naja naja.</title>
        <authorList>
            <person name="Suzuki-Matsubara M."/>
            <person name="Athauda S.B.P."/>
            <person name="Suzuki Y."/>
            <person name="Matsubara R.A.K."/>
            <person name="Moriyama A."/>
        </authorList>
    </citation>
    <scope>PROTEIN SEQUENCE</scope>
    <scope>FUNCTION</scope>
    <scope>SUBCELLULAR LOCATION</scope>
    <source>
        <tissue evidence="6">Venom</tissue>
    </source>
</reference>
<reference key="2">
    <citation type="journal article" date="2010" name="Biomed. Res.">
        <title>Molecular diversity in venom proteins of the Russell's viper (Daboia russellii russellii) and the Indian cobra (Naja naja) in Sri Lanka.</title>
        <authorList>
            <person name="Suzuki M."/>
            <person name="Itoh T."/>
            <person name="Bandaranayake B.M.A.I.K."/>
            <person name="Ranasinghe J.G."/>
            <person name="Athauda S.B."/>
            <person name="Moriyama A."/>
        </authorList>
    </citation>
    <scope>PROTEIN SEQUENCE OF 1-29</scope>
    <scope>SUBCELLULAR LOCATION</scope>
    <source>
        <tissue evidence="5">Venom</tissue>
    </source>
</reference>
<accession>P86538</accession>
<comment type="function">
    <text evidence="1 2 4">Shows cytolytic activity on many different cells by forming pore in lipid membranes. In vivo, increases heart rate or kills the animal by cardiac arrest. In addition, it binds to heparin with high affinity, interacts with Kv channel-interacting protein 1 (KCNIP1) in a calcium-independent manner, and binds to integrin alpha-V/beta-3 (ITGAV/ITGB3) with moderate affinity (By similarity). Preferentially binds acidic phospholipids like phosphatidylserine, phosphatidic acid and phosphatidyl glycerol (PubMed:26456928). Has hemolytic activity towards human erythrocytes (EC(50)=1.024 uM) and cytolytic activity towards various cell lines (PubMed:26456928).</text>
</comment>
<comment type="subunit">
    <text evidence="1">Monomer in solution; Homodimer and oligomer in the presence of negatively charged lipids forming a pore with a size ranging between 20 and 30 Angstroms.</text>
</comment>
<comment type="subcellular location">
    <subcellularLocation>
        <location evidence="3 4">Secreted</location>
    </subcellularLocation>
    <subcellularLocation>
        <location evidence="1">Target cell membrane</location>
    </subcellularLocation>
</comment>
<comment type="tissue specificity">
    <text evidence="7">Expressed by the venom gland.</text>
</comment>
<comment type="miscellaneous">
    <text evidence="7">Is classified as a S-type cytotoxin, since a serine residue stands at position 28 (Ser-29 in standard classification).</text>
</comment>
<comment type="similarity">
    <text evidence="7">Belongs to the three-finger toxin family. Short-chain subfamily. Type IA cytotoxin sub-subfamily.</text>
</comment>
<evidence type="ECO:0000250" key="1">
    <source>
        <dbReference type="UniProtKB" id="P60301"/>
    </source>
</evidence>
<evidence type="ECO:0000250" key="2">
    <source>
        <dbReference type="UniProtKB" id="P60304"/>
    </source>
</evidence>
<evidence type="ECO:0000269" key="3">
    <source>
    </source>
</evidence>
<evidence type="ECO:0000269" key="4">
    <source>
    </source>
</evidence>
<evidence type="ECO:0000303" key="5">
    <source>
    </source>
</evidence>
<evidence type="ECO:0000303" key="6">
    <source>
    </source>
</evidence>
<evidence type="ECO:0000305" key="7"/>
<evidence type="ECO:0000305" key="8">
    <source>
    </source>
</evidence>
<organism evidence="5">
    <name type="scientific">Naja naja</name>
    <name type="common">Indian cobra</name>
    <dbReference type="NCBI Taxonomy" id="35670"/>
    <lineage>
        <taxon>Eukaryota</taxon>
        <taxon>Metazoa</taxon>
        <taxon>Chordata</taxon>
        <taxon>Craniata</taxon>
        <taxon>Vertebrata</taxon>
        <taxon>Euteleostomi</taxon>
        <taxon>Lepidosauria</taxon>
        <taxon>Squamata</taxon>
        <taxon>Bifurcata</taxon>
        <taxon>Unidentata</taxon>
        <taxon>Episquamata</taxon>
        <taxon>Toxicofera</taxon>
        <taxon>Serpentes</taxon>
        <taxon>Colubroidea</taxon>
        <taxon>Elapidae</taxon>
        <taxon>Elapinae</taxon>
        <taxon>Naja</taxon>
    </lineage>
</organism>
<protein>
    <recommendedName>
        <fullName evidence="8">Cytotoxin 2a</fullName>
        <shortName evidence="8">CTX2a</shortName>
    </recommendedName>
    <alternativeName>
        <fullName evidence="5">Cytotoxin 2</fullName>
        <shortName evidence="5">CTX2</shortName>
    </alternativeName>
</protein>
<name>3SA2A_NAJNA</name>
<keyword id="KW-0123">Cardiotoxin</keyword>
<keyword id="KW-0204">Cytolysis</keyword>
<keyword id="KW-0903">Direct protein sequencing</keyword>
<keyword id="KW-1015">Disulfide bond</keyword>
<keyword id="KW-0472">Membrane</keyword>
<keyword id="KW-1185">Reference proteome</keyword>
<keyword id="KW-0964">Secreted</keyword>
<keyword id="KW-1052">Target cell membrane</keyword>
<keyword id="KW-1053">Target membrane</keyword>
<keyword id="KW-0800">Toxin</keyword>
<dbReference type="SMR" id="P86538"/>
<dbReference type="Proteomes" id="UP000694559">
    <property type="component" value="Unplaced"/>
</dbReference>
<dbReference type="GO" id="GO:0005576">
    <property type="term" value="C:extracellular region"/>
    <property type="evidence" value="ECO:0007669"/>
    <property type="project" value="UniProtKB-SubCell"/>
</dbReference>
<dbReference type="GO" id="GO:0016020">
    <property type="term" value="C:membrane"/>
    <property type="evidence" value="ECO:0007669"/>
    <property type="project" value="UniProtKB-KW"/>
</dbReference>
<dbReference type="GO" id="GO:0044218">
    <property type="term" value="C:other organism cell membrane"/>
    <property type="evidence" value="ECO:0007669"/>
    <property type="project" value="UniProtKB-KW"/>
</dbReference>
<dbReference type="GO" id="GO:0090729">
    <property type="term" value="F:toxin activity"/>
    <property type="evidence" value="ECO:0007669"/>
    <property type="project" value="UniProtKB-KW"/>
</dbReference>
<dbReference type="GO" id="GO:0031640">
    <property type="term" value="P:killing of cells of another organism"/>
    <property type="evidence" value="ECO:0007669"/>
    <property type="project" value="UniProtKB-KW"/>
</dbReference>
<dbReference type="CDD" id="cd00206">
    <property type="entry name" value="TFP_snake_toxin"/>
    <property type="match status" value="1"/>
</dbReference>
<dbReference type="FunFam" id="2.10.60.10:FF:000024">
    <property type="entry name" value="Cytotoxin 1"/>
    <property type="match status" value="1"/>
</dbReference>
<dbReference type="Gene3D" id="2.10.60.10">
    <property type="entry name" value="CD59"/>
    <property type="match status" value="1"/>
</dbReference>
<dbReference type="InterPro" id="IPR003572">
    <property type="entry name" value="Cytotoxin_Cobra"/>
</dbReference>
<dbReference type="InterPro" id="IPR003571">
    <property type="entry name" value="Snake_3FTx"/>
</dbReference>
<dbReference type="InterPro" id="IPR045860">
    <property type="entry name" value="Snake_toxin-like_sf"/>
</dbReference>
<dbReference type="InterPro" id="IPR018354">
    <property type="entry name" value="Snake_toxin_con_site"/>
</dbReference>
<dbReference type="InterPro" id="IPR054131">
    <property type="entry name" value="Toxin_cobra-type"/>
</dbReference>
<dbReference type="Pfam" id="PF21947">
    <property type="entry name" value="Toxin_cobra-type"/>
    <property type="match status" value="1"/>
</dbReference>
<dbReference type="PRINTS" id="PR00282">
    <property type="entry name" value="CYTOTOXIN"/>
</dbReference>
<dbReference type="SUPFAM" id="SSF57302">
    <property type="entry name" value="Snake toxin-like"/>
    <property type="match status" value="1"/>
</dbReference>
<dbReference type="PROSITE" id="PS00272">
    <property type="entry name" value="SNAKE_TOXIN"/>
    <property type="match status" value="1"/>
</dbReference>
<sequence>LQCNKLVPIASKTCPPGKNLCYKMFMVSDLTIPVKRGCIDVCPKNSLLVKYECCNTDRCN</sequence>